<accession>B2K0Y4</accession>
<feature type="chain" id="PRO_1000187824" description="Ubiquinone/menaquinone biosynthesis C-methyltransferase UbiE">
    <location>
        <begin position="1"/>
        <end position="251"/>
    </location>
</feature>
<feature type="binding site" evidence="1">
    <location>
        <position position="74"/>
    </location>
    <ligand>
        <name>S-adenosyl-L-methionine</name>
        <dbReference type="ChEBI" id="CHEBI:59789"/>
    </ligand>
</feature>
<feature type="binding site" evidence="1">
    <location>
        <position position="95"/>
    </location>
    <ligand>
        <name>S-adenosyl-L-methionine</name>
        <dbReference type="ChEBI" id="CHEBI:59789"/>
    </ligand>
</feature>
<feature type="binding site" evidence="1">
    <location>
        <begin position="123"/>
        <end position="124"/>
    </location>
    <ligand>
        <name>S-adenosyl-L-methionine</name>
        <dbReference type="ChEBI" id="CHEBI:59789"/>
    </ligand>
</feature>
<feature type="binding site" evidence="1">
    <location>
        <position position="140"/>
    </location>
    <ligand>
        <name>S-adenosyl-L-methionine</name>
        <dbReference type="ChEBI" id="CHEBI:59789"/>
    </ligand>
</feature>
<gene>
    <name evidence="1" type="primary">ubiE</name>
    <name type="ordered locus">YPTS_0271</name>
</gene>
<sequence>MVDQEKETTHFGFRTVAKEQKEGMVAEVFHSVAAKYDLMNDLMSFGVHRIWKRFTVDCSGVRRGQRVLDLAGGTGDLTAKFSRLVGEQGEVILADINESMLRMGREKLRDKGIVGNVSYVQANAEALPFPDNYFDCITISFGLRNVTEKEKALRSMFRVLKPGGRLLVLEFSKPLLEPLSKAYDAYSFHILPKIGELVAQDAESYRYLAESIRMHPDQETLKGMMADAGFENVTYSNLTGGIVALHRGFKF</sequence>
<evidence type="ECO:0000255" key="1">
    <source>
        <dbReference type="HAMAP-Rule" id="MF_01813"/>
    </source>
</evidence>
<name>UBIE_YERPB</name>
<keyword id="KW-0474">Menaquinone biosynthesis</keyword>
<keyword id="KW-0489">Methyltransferase</keyword>
<keyword id="KW-0949">S-adenosyl-L-methionine</keyword>
<keyword id="KW-0808">Transferase</keyword>
<keyword id="KW-0831">Ubiquinone biosynthesis</keyword>
<dbReference type="EC" id="2.1.1.163" evidence="1"/>
<dbReference type="EC" id="2.1.1.201" evidence="1"/>
<dbReference type="EMBL" id="CP001048">
    <property type="protein sequence ID" value="ACC87266.1"/>
    <property type="molecule type" value="Genomic_DNA"/>
</dbReference>
<dbReference type="RefSeq" id="WP_002224024.1">
    <property type="nucleotide sequence ID" value="NZ_CP009780.1"/>
</dbReference>
<dbReference type="SMR" id="B2K0Y4"/>
<dbReference type="GeneID" id="49787763"/>
<dbReference type="KEGG" id="ypb:YPTS_0271"/>
<dbReference type="PATRIC" id="fig|502801.10.peg.3949"/>
<dbReference type="UniPathway" id="UPA00079">
    <property type="reaction ID" value="UER00169"/>
</dbReference>
<dbReference type="UniPathway" id="UPA00232"/>
<dbReference type="GO" id="GO:0008425">
    <property type="term" value="F:2-methoxy-6-polyprenyl-1,4-benzoquinol methyltransferase activity"/>
    <property type="evidence" value="ECO:0007669"/>
    <property type="project" value="UniProtKB-UniRule"/>
</dbReference>
<dbReference type="GO" id="GO:0043770">
    <property type="term" value="F:demethylmenaquinone methyltransferase activity"/>
    <property type="evidence" value="ECO:0007669"/>
    <property type="project" value="UniProtKB-UniRule"/>
</dbReference>
<dbReference type="GO" id="GO:0009060">
    <property type="term" value="P:aerobic respiration"/>
    <property type="evidence" value="ECO:0007669"/>
    <property type="project" value="UniProtKB-UniRule"/>
</dbReference>
<dbReference type="GO" id="GO:0009234">
    <property type="term" value="P:menaquinone biosynthetic process"/>
    <property type="evidence" value="ECO:0007669"/>
    <property type="project" value="UniProtKB-UniRule"/>
</dbReference>
<dbReference type="GO" id="GO:0032259">
    <property type="term" value="P:methylation"/>
    <property type="evidence" value="ECO:0007669"/>
    <property type="project" value="UniProtKB-KW"/>
</dbReference>
<dbReference type="CDD" id="cd02440">
    <property type="entry name" value="AdoMet_MTases"/>
    <property type="match status" value="1"/>
</dbReference>
<dbReference type="FunFam" id="3.40.50.150:FF:000014">
    <property type="entry name" value="Ubiquinone/menaquinone biosynthesis C-methyltransferase UbiE"/>
    <property type="match status" value="1"/>
</dbReference>
<dbReference type="Gene3D" id="3.40.50.150">
    <property type="entry name" value="Vaccinia Virus protein VP39"/>
    <property type="match status" value="1"/>
</dbReference>
<dbReference type="HAMAP" id="MF_01813">
    <property type="entry name" value="MenG_UbiE_methyltr"/>
    <property type="match status" value="1"/>
</dbReference>
<dbReference type="InterPro" id="IPR029063">
    <property type="entry name" value="SAM-dependent_MTases_sf"/>
</dbReference>
<dbReference type="InterPro" id="IPR004033">
    <property type="entry name" value="UbiE/COQ5_MeTrFase"/>
</dbReference>
<dbReference type="InterPro" id="IPR023576">
    <property type="entry name" value="UbiE/COQ5_MeTrFase_CS"/>
</dbReference>
<dbReference type="NCBIfam" id="TIGR01934">
    <property type="entry name" value="MenG_MenH_UbiE"/>
    <property type="match status" value="1"/>
</dbReference>
<dbReference type="NCBIfam" id="NF001240">
    <property type="entry name" value="PRK00216.1-1"/>
    <property type="match status" value="1"/>
</dbReference>
<dbReference type="NCBIfam" id="NF001242">
    <property type="entry name" value="PRK00216.1-3"/>
    <property type="match status" value="1"/>
</dbReference>
<dbReference type="NCBIfam" id="NF001244">
    <property type="entry name" value="PRK00216.1-5"/>
    <property type="match status" value="1"/>
</dbReference>
<dbReference type="PANTHER" id="PTHR43591:SF24">
    <property type="entry name" value="2-METHOXY-6-POLYPRENYL-1,4-BENZOQUINOL METHYLASE, MITOCHONDRIAL"/>
    <property type="match status" value="1"/>
</dbReference>
<dbReference type="PANTHER" id="PTHR43591">
    <property type="entry name" value="METHYLTRANSFERASE"/>
    <property type="match status" value="1"/>
</dbReference>
<dbReference type="Pfam" id="PF01209">
    <property type="entry name" value="Ubie_methyltran"/>
    <property type="match status" value="1"/>
</dbReference>
<dbReference type="SUPFAM" id="SSF53335">
    <property type="entry name" value="S-adenosyl-L-methionine-dependent methyltransferases"/>
    <property type="match status" value="1"/>
</dbReference>
<dbReference type="PROSITE" id="PS51608">
    <property type="entry name" value="SAM_MT_UBIE"/>
    <property type="match status" value="1"/>
</dbReference>
<dbReference type="PROSITE" id="PS01183">
    <property type="entry name" value="UBIE_1"/>
    <property type="match status" value="1"/>
</dbReference>
<dbReference type="PROSITE" id="PS01184">
    <property type="entry name" value="UBIE_2"/>
    <property type="match status" value="1"/>
</dbReference>
<proteinExistence type="inferred from homology"/>
<comment type="function">
    <text evidence="1">Methyltransferase required for the conversion of demethylmenaquinol (DMKH2) to menaquinol (MKH2) and the conversion of 2-polyprenyl-6-methoxy-1,4-benzoquinol (DDMQH2) to 2-polyprenyl-3-methyl-6-methoxy-1,4-benzoquinol (DMQH2).</text>
</comment>
<comment type="catalytic activity">
    <reaction evidence="1">
        <text>a 2-demethylmenaquinol + S-adenosyl-L-methionine = a menaquinol + S-adenosyl-L-homocysteine + H(+)</text>
        <dbReference type="Rhea" id="RHEA:42640"/>
        <dbReference type="Rhea" id="RHEA-COMP:9539"/>
        <dbReference type="Rhea" id="RHEA-COMP:9563"/>
        <dbReference type="ChEBI" id="CHEBI:15378"/>
        <dbReference type="ChEBI" id="CHEBI:18151"/>
        <dbReference type="ChEBI" id="CHEBI:55437"/>
        <dbReference type="ChEBI" id="CHEBI:57856"/>
        <dbReference type="ChEBI" id="CHEBI:59789"/>
        <dbReference type="EC" id="2.1.1.163"/>
    </reaction>
</comment>
<comment type="catalytic activity">
    <reaction evidence="1">
        <text>a 2-methoxy-6-(all-trans-polyprenyl)benzene-1,4-diol + S-adenosyl-L-methionine = a 5-methoxy-2-methyl-3-(all-trans-polyprenyl)benzene-1,4-diol + S-adenosyl-L-homocysteine + H(+)</text>
        <dbReference type="Rhea" id="RHEA:28286"/>
        <dbReference type="Rhea" id="RHEA-COMP:10858"/>
        <dbReference type="Rhea" id="RHEA-COMP:10859"/>
        <dbReference type="ChEBI" id="CHEBI:15378"/>
        <dbReference type="ChEBI" id="CHEBI:57856"/>
        <dbReference type="ChEBI" id="CHEBI:59789"/>
        <dbReference type="ChEBI" id="CHEBI:84166"/>
        <dbReference type="ChEBI" id="CHEBI:84167"/>
        <dbReference type="EC" id="2.1.1.201"/>
    </reaction>
</comment>
<comment type="pathway">
    <text evidence="1">Quinol/quinone metabolism; menaquinone biosynthesis; menaquinol from 1,4-dihydroxy-2-naphthoate: step 2/2.</text>
</comment>
<comment type="pathway">
    <text evidence="1">Cofactor biosynthesis; ubiquinone biosynthesis.</text>
</comment>
<comment type="similarity">
    <text evidence="1">Belongs to the class I-like SAM-binding methyltransferase superfamily. MenG/UbiE family.</text>
</comment>
<organism>
    <name type="scientific">Yersinia pseudotuberculosis serotype IB (strain PB1/+)</name>
    <dbReference type="NCBI Taxonomy" id="502801"/>
    <lineage>
        <taxon>Bacteria</taxon>
        <taxon>Pseudomonadati</taxon>
        <taxon>Pseudomonadota</taxon>
        <taxon>Gammaproteobacteria</taxon>
        <taxon>Enterobacterales</taxon>
        <taxon>Yersiniaceae</taxon>
        <taxon>Yersinia</taxon>
    </lineage>
</organism>
<protein>
    <recommendedName>
        <fullName evidence="1">Ubiquinone/menaquinone biosynthesis C-methyltransferase UbiE</fullName>
        <ecNumber evidence="1">2.1.1.163</ecNumber>
        <ecNumber evidence="1">2.1.1.201</ecNumber>
    </recommendedName>
    <alternativeName>
        <fullName evidence="1">2-methoxy-6-polyprenyl-1,4-benzoquinol methylase</fullName>
    </alternativeName>
    <alternativeName>
        <fullName evidence="1">Demethylmenaquinone methyltransferase</fullName>
    </alternativeName>
</protein>
<reference key="1">
    <citation type="submission" date="2008-04" db="EMBL/GenBank/DDBJ databases">
        <title>Complete sequence of Yersinia pseudotuberculosis PB1/+.</title>
        <authorList>
            <person name="Copeland A."/>
            <person name="Lucas S."/>
            <person name="Lapidus A."/>
            <person name="Glavina del Rio T."/>
            <person name="Dalin E."/>
            <person name="Tice H."/>
            <person name="Bruce D."/>
            <person name="Goodwin L."/>
            <person name="Pitluck S."/>
            <person name="Munk A.C."/>
            <person name="Brettin T."/>
            <person name="Detter J.C."/>
            <person name="Han C."/>
            <person name="Tapia R."/>
            <person name="Schmutz J."/>
            <person name="Larimer F."/>
            <person name="Land M."/>
            <person name="Hauser L."/>
            <person name="Challacombe J.F."/>
            <person name="Green L."/>
            <person name="Lindler L.E."/>
            <person name="Nikolich M.P."/>
            <person name="Richardson P."/>
        </authorList>
    </citation>
    <scope>NUCLEOTIDE SEQUENCE [LARGE SCALE GENOMIC DNA]</scope>
    <source>
        <strain>PB1/+</strain>
    </source>
</reference>